<dbReference type="EC" id="2.3.1.12"/>
<dbReference type="EMBL" id="Z77659">
    <property type="protein sequence ID" value="CAB01163.1"/>
    <property type="molecule type" value="Genomic_DNA"/>
</dbReference>
<dbReference type="PIR" id="T21287">
    <property type="entry name" value="T21287"/>
</dbReference>
<dbReference type="RefSeq" id="NP_001369968.1">
    <property type="nucleotide sequence ID" value="NM_001383452.2"/>
</dbReference>
<dbReference type="RefSeq" id="NP_506579.1">
    <property type="nucleotide sequence ID" value="NM_074178.6"/>
</dbReference>
<dbReference type="SMR" id="Q19749"/>
<dbReference type="BioGRID" id="44949">
    <property type="interactions" value="63"/>
</dbReference>
<dbReference type="DIP" id="DIP-24773N"/>
<dbReference type="FunCoup" id="Q19749">
    <property type="interactions" value="2587"/>
</dbReference>
<dbReference type="IntAct" id="Q19749">
    <property type="interactions" value="23"/>
</dbReference>
<dbReference type="STRING" id="6239.F23B12.5.1"/>
<dbReference type="PaxDb" id="6239-F23B12.5"/>
<dbReference type="PeptideAtlas" id="Q19749"/>
<dbReference type="EnsemblMetazoa" id="F23B12.5.1">
    <property type="protein sequence ID" value="F23B12.5.1"/>
    <property type="gene ID" value="WBGene00009082"/>
</dbReference>
<dbReference type="GeneID" id="179945"/>
<dbReference type="UCSC" id="F23B12.5">
    <property type="organism name" value="c. elegans"/>
</dbReference>
<dbReference type="AGR" id="WB:WBGene00009082"/>
<dbReference type="WormBase" id="F23B12.5">
    <property type="protein sequence ID" value="CE09597"/>
    <property type="gene ID" value="WBGene00009082"/>
    <property type="gene designation" value="dlat-1"/>
</dbReference>
<dbReference type="eggNOG" id="KOG0557">
    <property type="taxonomic scope" value="Eukaryota"/>
</dbReference>
<dbReference type="GeneTree" id="ENSGT00940000154943"/>
<dbReference type="HOGENOM" id="CLU_016733_10_2_1"/>
<dbReference type="InParanoid" id="Q19749"/>
<dbReference type="OMA" id="TMEFESF"/>
<dbReference type="OrthoDB" id="537444at2759"/>
<dbReference type="PhylomeDB" id="Q19749"/>
<dbReference type="Reactome" id="R-CEL-204174">
    <property type="pathway name" value="Regulation of pyruvate dehydrogenase (PDH) complex"/>
</dbReference>
<dbReference type="Reactome" id="R-CEL-5362517">
    <property type="pathway name" value="Signaling by Retinoic Acid"/>
</dbReference>
<dbReference type="Reactome" id="R-CEL-9857492">
    <property type="pathway name" value="Protein lipoylation"/>
</dbReference>
<dbReference type="Reactome" id="R-CEL-9861559">
    <property type="pathway name" value="PDH complex synthesizes acetyl-CoA from PYR"/>
</dbReference>
<dbReference type="SignaLink" id="Q19749"/>
<dbReference type="PRO" id="PR:Q19749"/>
<dbReference type="Proteomes" id="UP000001940">
    <property type="component" value="Chromosome V"/>
</dbReference>
<dbReference type="Bgee" id="WBGene00009082">
    <property type="expression patterns" value="Expressed in adult organism and 4 other cell types or tissues"/>
</dbReference>
<dbReference type="GO" id="GO:0005759">
    <property type="term" value="C:mitochondrial matrix"/>
    <property type="evidence" value="ECO:0007669"/>
    <property type="project" value="UniProtKB-SubCell"/>
</dbReference>
<dbReference type="GO" id="GO:0045254">
    <property type="term" value="C:pyruvate dehydrogenase complex"/>
    <property type="evidence" value="ECO:0000318"/>
    <property type="project" value="GO_Central"/>
</dbReference>
<dbReference type="GO" id="GO:0004742">
    <property type="term" value="F:dihydrolipoyllysine-residue acetyltransferase activity"/>
    <property type="evidence" value="ECO:0000318"/>
    <property type="project" value="GO_Central"/>
</dbReference>
<dbReference type="GO" id="GO:0006086">
    <property type="term" value="P:pyruvate decarboxylation to acetyl-CoA"/>
    <property type="evidence" value="ECO:0000318"/>
    <property type="project" value="GO_Central"/>
</dbReference>
<dbReference type="CDD" id="cd06849">
    <property type="entry name" value="lipoyl_domain"/>
    <property type="match status" value="1"/>
</dbReference>
<dbReference type="FunFam" id="2.40.50.100:FF:000010">
    <property type="entry name" value="Acetyltransferase component of pyruvate dehydrogenase complex"/>
    <property type="match status" value="1"/>
</dbReference>
<dbReference type="FunFam" id="3.30.559.10:FF:000003">
    <property type="entry name" value="Acetyltransferase component of pyruvate dehydrogenase complex"/>
    <property type="match status" value="1"/>
</dbReference>
<dbReference type="Gene3D" id="2.40.50.100">
    <property type="match status" value="1"/>
</dbReference>
<dbReference type="Gene3D" id="3.30.559.10">
    <property type="entry name" value="Chloramphenicol acetyltransferase-like domain"/>
    <property type="match status" value="1"/>
</dbReference>
<dbReference type="Gene3D" id="4.10.320.10">
    <property type="entry name" value="E3-binding domain"/>
    <property type="match status" value="1"/>
</dbReference>
<dbReference type="InterPro" id="IPR003016">
    <property type="entry name" value="2-oxoA_DH_lipoyl-BS"/>
</dbReference>
<dbReference type="InterPro" id="IPR001078">
    <property type="entry name" value="2-oxoacid_DH_actylTfrase"/>
</dbReference>
<dbReference type="InterPro" id="IPR000089">
    <property type="entry name" value="Biotin_lipoyl"/>
</dbReference>
<dbReference type="InterPro" id="IPR023213">
    <property type="entry name" value="CAT-like_dom_sf"/>
</dbReference>
<dbReference type="InterPro" id="IPR045257">
    <property type="entry name" value="E2/Pdx1"/>
</dbReference>
<dbReference type="InterPro" id="IPR036625">
    <property type="entry name" value="E3-bd_dom_sf"/>
</dbReference>
<dbReference type="InterPro" id="IPR006257">
    <property type="entry name" value="LAT1"/>
</dbReference>
<dbReference type="InterPro" id="IPR004167">
    <property type="entry name" value="PSBD"/>
</dbReference>
<dbReference type="InterPro" id="IPR011053">
    <property type="entry name" value="Single_hybrid_motif"/>
</dbReference>
<dbReference type="NCBIfam" id="TIGR01349">
    <property type="entry name" value="PDHac_trf_mito"/>
    <property type="match status" value="1"/>
</dbReference>
<dbReference type="PANTHER" id="PTHR23151">
    <property type="entry name" value="DIHYDROLIPOAMIDE ACETYL/SUCCINYL-TRANSFERASE-RELATED"/>
    <property type="match status" value="1"/>
</dbReference>
<dbReference type="PANTHER" id="PTHR23151:SF89">
    <property type="entry name" value="DIHYDROLIPOYLLYSINE-RESIDUE ACETYLTRANSFERASE COMPONENT OF PYRUVATE DEHYDROGENASE COMPLEX, MITOCHONDRIAL"/>
    <property type="match status" value="1"/>
</dbReference>
<dbReference type="Pfam" id="PF00198">
    <property type="entry name" value="2-oxoacid_dh"/>
    <property type="match status" value="1"/>
</dbReference>
<dbReference type="Pfam" id="PF00364">
    <property type="entry name" value="Biotin_lipoyl"/>
    <property type="match status" value="1"/>
</dbReference>
<dbReference type="Pfam" id="PF02817">
    <property type="entry name" value="E3_binding"/>
    <property type="match status" value="1"/>
</dbReference>
<dbReference type="SUPFAM" id="SSF52777">
    <property type="entry name" value="CoA-dependent acyltransferases"/>
    <property type="match status" value="1"/>
</dbReference>
<dbReference type="SUPFAM" id="SSF47005">
    <property type="entry name" value="Peripheral subunit-binding domain of 2-oxo acid dehydrogenase complex"/>
    <property type="match status" value="1"/>
</dbReference>
<dbReference type="SUPFAM" id="SSF51230">
    <property type="entry name" value="Single hybrid motif"/>
    <property type="match status" value="1"/>
</dbReference>
<dbReference type="PROSITE" id="PS50968">
    <property type="entry name" value="BIOTINYL_LIPOYL"/>
    <property type="match status" value="1"/>
</dbReference>
<dbReference type="PROSITE" id="PS00189">
    <property type="entry name" value="LIPOYL"/>
    <property type="match status" value="1"/>
</dbReference>
<dbReference type="PROSITE" id="PS51826">
    <property type="entry name" value="PSBD"/>
    <property type="match status" value="1"/>
</dbReference>
<accession>Q19749</accession>
<sequence length="507" mass="53467">MSKFPVPLRTIGGLRPSTTAAISAANIGFTQSSRALSTGAAAKSSGLVGQVARQYPNAAAFSIKQVRLYSSGNLPKHNRVALPALSPTMELGTVVSWQKKEGDQLSEGDLLCEIETDKATMGFETPEEGYLAKILIQEGSKDVPIGKLLCIIVDNEADVAAFKDFKDDGASSGGSAPAAEKAPEPAKPAASSQPSPPAQMYQAPSVPKSAPIPHSSSGRVSASPFAKKLAAENGLDLSGVSGSGPGGRILASDLSQAPAKGATSTTTQAVSGQDYTDIPLSNMRKTIAKRLTESKSTIPHYYLTSEIQLDTLLQVREKLNGLLAKGTSGQATKISINDFIIKASALACQRVPEANSYWMDSFIRENHHVDVSVAVSTPAGLITPIIFNAHAKGLATIASEIVELAQRAREGKLQPHEFQGGTFTVSNLGMFGSVSDFTAIINPPQSCILAIGGASDKLVPDEAEGYKKIKTMKVTLSCDHRTVDGAVGAVWLRHFKEFLEKPHTMLL</sequence>
<reference evidence="7" key="1">
    <citation type="journal article" date="1998" name="Science">
        <title>Genome sequence of the nematode C. elegans: a platform for investigating biology.</title>
        <authorList>
            <consortium name="The C. elegans sequencing consortium"/>
        </authorList>
    </citation>
    <scope>NUCLEOTIDE SEQUENCE [LARGE SCALE GENOMIC DNA]</scope>
    <source>
        <strain>Bristol N2</strain>
    </source>
</reference>
<reference evidence="6 7" key="2">
    <citation type="submission" date="2006-03" db="UniProtKB">
        <authorList>
            <person name="Bienvenut W.V."/>
        </authorList>
    </citation>
    <scope>PROTEIN SEQUENCE OF 249-260; 334-350; 393-407 AND 482-493</scope>
    <scope>IDENTIFICATION BY MASS SPECTROMETRY</scope>
</reference>
<feature type="transit peptide" description="Mitochondrion" evidence="2">
    <location>
        <begin position="1"/>
        <end status="unknown"/>
    </location>
</feature>
<feature type="chain" id="PRO_0000244484" description="Dihydrolipoyllysine-residue acetyltransferase component of pyruvate dehydrogenase complex, mitochondrial">
    <location>
        <begin status="unknown"/>
        <end position="507"/>
    </location>
</feature>
<feature type="domain" description="Lipoyl-binding" evidence="3">
    <location>
        <begin position="77"/>
        <end position="153"/>
    </location>
</feature>
<feature type="domain" description="Peripheral subunit-binding (PSBD)" evidence="4">
    <location>
        <begin position="221"/>
        <end position="258"/>
    </location>
</feature>
<feature type="region of interest" description="Disordered" evidence="5">
    <location>
        <begin position="168"/>
        <end position="223"/>
    </location>
</feature>
<feature type="region of interest" description="Disordered" evidence="5">
    <location>
        <begin position="248"/>
        <end position="270"/>
    </location>
</feature>
<feature type="active site" evidence="2">
    <location>
        <position position="480"/>
    </location>
</feature>
<feature type="active site" evidence="2">
    <location>
        <position position="484"/>
    </location>
</feature>
<feature type="modified residue" description="N6-lipoyllysine" evidence="1 3">
    <location>
        <position position="118"/>
    </location>
</feature>
<name>ODP2_CAEEL</name>
<organism>
    <name type="scientific">Caenorhabditis elegans</name>
    <dbReference type="NCBI Taxonomy" id="6239"/>
    <lineage>
        <taxon>Eukaryota</taxon>
        <taxon>Metazoa</taxon>
        <taxon>Ecdysozoa</taxon>
        <taxon>Nematoda</taxon>
        <taxon>Chromadorea</taxon>
        <taxon>Rhabditida</taxon>
        <taxon>Rhabditina</taxon>
        <taxon>Rhabditomorpha</taxon>
        <taxon>Rhabditoidea</taxon>
        <taxon>Rhabditidae</taxon>
        <taxon>Peloderinae</taxon>
        <taxon>Caenorhabditis</taxon>
    </lineage>
</organism>
<evidence type="ECO:0000250" key="1"/>
<evidence type="ECO:0000255" key="2"/>
<evidence type="ECO:0000255" key="3">
    <source>
        <dbReference type="PROSITE-ProRule" id="PRU01066"/>
    </source>
</evidence>
<evidence type="ECO:0000255" key="4">
    <source>
        <dbReference type="PROSITE-ProRule" id="PRU01170"/>
    </source>
</evidence>
<evidence type="ECO:0000256" key="5">
    <source>
        <dbReference type="SAM" id="MobiDB-lite"/>
    </source>
</evidence>
<evidence type="ECO:0000305" key="6"/>
<evidence type="ECO:0000312" key="7">
    <source>
        <dbReference type="EMBL" id="CAB01163.1"/>
    </source>
</evidence>
<evidence type="ECO:0000312" key="8">
    <source>
        <dbReference type="WormBase" id="F23B12.5"/>
    </source>
</evidence>
<proteinExistence type="evidence at protein level"/>
<comment type="function">
    <text evidence="6">The pyruvate dehydrogenase complex catalyzes the overall conversion of pyruvate to acetyl-CoA and CO(2). It contains multiple copies of three enzymatic components: pyruvate dehydrogenase (E1), dihydrolipoamide acetyltransferase (E2) and lipoamide dehydrogenase (E3).</text>
</comment>
<comment type="catalytic activity">
    <reaction evidence="6">
        <text>N(6)-[(R)-dihydrolipoyl]-L-lysyl-[protein] + acetyl-CoA = N(6)-[(R)-S(8)-acetyldihydrolipoyl]-L-lysyl-[protein] + CoA</text>
        <dbReference type="Rhea" id="RHEA:17017"/>
        <dbReference type="Rhea" id="RHEA-COMP:10475"/>
        <dbReference type="Rhea" id="RHEA-COMP:10478"/>
        <dbReference type="ChEBI" id="CHEBI:57287"/>
        <dbReference type="ChEBI" id="CHEBI:57288"/>
        <dbReference type="ChEBI" id="CHEBI:83100"/>
        <dbReference type="ChEBI" id="CHEBI:83111"/>
        <dbReference type="EC" id="2.3.1.12"/>
    </reaction>
</comment>
<comment type="cofactor">
    <cofactor evidence="1">
        <name>(R)-lipoate</name>
        <dbReference type="ChEBI" id="CHEBI:83088"/>
    </cofactor>
    <text evidence="1">Binds 1 lipoyl cofactor covalently.</text>
</comment>
<comment type="interaction">
    <interactant intactId="EBI-320763">
        <id>Q19749</id>
    </interactant>
    <interactant intactId="EBI-318513">
        <id>Q9U9Y8</id>
        <label>lit-1</label>
    </interactant>
    <organismsDiffer>false</organismsDiffer>
    <experiments>2</experiments>
</comment>
<comment type="subcellular location">
    <subcellularLocation>
        <location evidence="1">Mitochondrion matrix</location>
    </subcellularLocation>
</comment>
<comment type="similarity">
    <text evidence="2">Belongs to the 2-oxoacid dehydrogenase family.</text>
</comment>
<protein>
    <recommendedName>
        <fullName>Dihydrolipoyllysine-residue acetyltransferase component of pyruvate dehydrogenase complex, mitochondrial</fullName>
        <ecNumber>2.3.1.12</ecNumber>
    </recommendedName>
    <alternativeName>
        <fullName>Dihydrolipoamide acetyltransferase component of pyruvate dehydrogenase complex</fullName>
    </alternativeName>
    <alternativeName>
        <fullName>Pyruvate dehydrogenase complex component E2</fullName>
        <shortName>PDC-E2</shortName>
        <shortName>PDCE2</shortName>
    </alternativeName>
</protein>
<keyword id="KW-0012">Acyltransferase</keyword>
<keyword id="KW-0903">Direct protein sequencing</keyword>
<keyword id="KW-0450">Lipoyl</keyword>
<keyword id="KW-0496">Mitochondrion</keyword>
<keyword id="KW-1185">Reference proteome</keyword>
<keyword id="KW-0677">Repeat</keyword>
<keyword id="KW-0808">Transferase</keyword>
<keyword id="KW-0809">Transit peptide</keyword>
<gene>
    <name evidence="8" type="primary">dlat-1</name>
    <name evidence="8" type="ORF">F23B12.5</name>
</gene>